<gene>
    <name evidence="1" type="primary">mraZ</name>
    <name type="ordered locus">Sfri_3813</name>
</gene>
<name>MRAZ_SHEFN</name>
<feature type="chain" id="PRO_1000062932" description="Transcriptional regulator MraZ">
    <location>
        <begin position="1"/>
        <end position="152"/>
    </location>
</feature>
<feature type="domain" description="SpoVT-AbrB 1" evidence="2">
    <location>
        <begin position="5"/>
        <end position="52"/>
    </location>
</feature>
<feature type="domain" description="SpoVT-AbrB 2" evidence="2">
    <location>
        <begin position="81"/>
        <end position="124"/>
    </location>
</feature>
<comment type="subunit">
    <text evidence="1">Forms oligomers.</text>
</comment>
<comment type="subcellular location">
    <subcellularLocation>
        <location evidence="1">Cytoplasm</location>
        <location evidence="1">Nucleoid</location>
    </subcellularLocation>
</comment>
<comment type="similarity">
    <text evidence="1">Belongs to the MraZ family.</text>
</comment>
<accession>Q07WH6</accession>
<sequence>MFRGASAINMDAKGRIAIPARYRDALRVEHAGTVIMTVDIDAACLLIYPLHEWEQIEAKLKLLSDTDPLERSFKRKLLGHAQDCELDSHGRIVIPPALRSFASLEKKTMLVGLLNKFELWEESAWQQQMDDGNALIQSQDLASNERLAHFSL</sequence>
<keyword id="KW-0963">Cytoplasm</keyword>
<keyword id="KW-0238">DNA-binding</keyword>
<keyword id="KW-1185">Reference proteome</keyword>
<keyword id="KW-0677">Repeat</keyword>
<keyword id="KW-0804">Transcription</keyword>
<keyword id="KW-0805">Transcription regulation</keyword>
<dbReference type="EMBL" id="CP000447">
    <property type="protein sequence ID" value="ABI73638.1"/>
    <property type="molecule type" value="Genomic_DNA"/>
</dbReference>
<dbReference type="RefSeq" id="WP_011639223.1">
    <property type="nucleotide sequence ID" value="NC_008345.1"/>
</dbReference>
<dbReference type="SMR" id="Q07WH6"/>
<dbReference type="STRING" id="318167.Sfri_3813"/>
<dbReference type="KEGG" id="sfr:Sfri_3813"/>
<dbReference type="eggNOG" id="COG2001">
    <property type="taxonomic scope" value="Bacteria"/>
</dbReference>
<dbReference type="HOGENOM" id="CLU_107907_2_0_6"/>
<dbReference type="OrthoDB" id="9807753at2"/>
<dbReference type="Proteomes" id="UP000000684">
    <property type="component" value="Chromosome"/>
</dbReference>
<dbReference type="GO" id="GO:0005737">
    <property type="term" value="C:cytoplasm"/>
    <property type="evidence" value="ECO:0007669"/>
    <property type="project" value="UniProtKB-UniRule"/>
</dbReference>
<dbReference type="GO" id="GO:0009295">
    <property type="term" value="C:nucleoid"/>
    <property type="evidence" value="ECO:0007669"/>
    <property type="project" value="UniProtKB-SubCell"/>
</dbReference>
<dbReference type="GO" id="GO:0003700">
    <property type="term" value="F:DNA-binding transcription factor activity"/>
    <property type="evidence" value="ECO:0007669"/>
    <property type="project" value="UniProtKB-UniRule"/>
</dbReference>
<dbReference type="GO" id="GO:0000976">
    <property type="term" value="F:transcription cis-regulatory region binding"/>
    <property type="evidence" value="ECO:0007669"/>
    <property type="project" value="TreeGrafter"/>
</dbReference>
<dbReference type="GO" id="GO:2000143">
    <property type="term" value="P:negative regulation of DNA-templated transcription initiation"/>
    <property type="evidence" value="ECO:0007669"/>
    <property type="project" value="TreeGrafter"/>
</dbReference>
<dbReference type="CDD" id="cd16321">
    <property type="entry name" value="MraZ_C"/>
    <property type="match status" value="1"/>
</dbReference>
<dbReference type="CDD" id="cd16320">
    <property type="entry name" value="MraZ_N"/>
    <property type="match status" value="1"/>
</dbReference>
<dbReference type="Gene3D" id="3.40.1550.20">
    <property type="entry name" value="Transcriptional regulator MraZ domain"/>
    <property type="match status" value="1"/>
</dbReference>
<dbReference type="HAMAP" id="MF_01008">
    <property type="entry name" value="MraZ"/>
    <property type="match status" value="1"/>
</dbReference>
<dbReference type="InterPro" id="IPR003444">
    <property type="entry name" value="MraZ"/>
</dbReference>
<dbReference type="InterPro" id="IPR035644">
    <property type="entry name" value="MraZ_C"/>
</dbReference>
<dbReference type="InterPro" id="IPR020603">
    <property type="entry name" value="MraZ_dom"/>
</dbReference>
<dbReference type="InterPro" id="IPR035642">
    <property type="entry name" value="MraZ_N"/>
</dbReference>
<dbReference type="InterPro" id="IPR038619">
    <property type="entry name" value="MraZ_sf"/>
</dbReference>
<dbReference type="InterPro" id="IPR007159">
    <property type="entry name" value="SpoVT-AbrB_dom"/>
</dbReference>
<dbReference type="InterPro" id="IPR037914">
    <property type="entry name" value="SpoVT-AbrB_sf"/>
</dbReference>
<dbReference type="NCBIfam" id="TIGR00242">
    <property type="entry name" value="division/cell wall cluster transcriptional repressor MraZ"/>
    <property type="match status" value="1"/>
</dbReference>
<dbReference type="PANTHER" id="PTHR34701">
    <property type="entry name" value="TRANSCRIPTIONAL REGULATOR MRAZ"/>
    <property type="match status" value="1"/>
</dbReference>
<dbReference type="PANTHER" id="PTHR34701:SF1">
    <property type="entry name" value="TRANSCRIPTIONAL REGULATOR MRAZ"/>
    <property type="match status" value="1"/>
</dbReference>
<dbReference type="Pfam" id="PF02381">
    <property type="entry name" value="MraZ"/>
    <property type="match status" value="2"/>
</dbReference>
<dbReference type="SUPFAM" id="SSF89447">
    <property type="entry name" value="AbrB/MazE/MraZ-like"/>
    <property type="match status" value="1"/>
</dbReference>
<dbReference type="PROSITE" id="PS51740">
    <property type="entry name" value="SPOVT_ABRB"/>
    <property type="match status" value="2"/>
</dbReference>
<proteinExistence type="inferred from homology"/>
<reference key="1">
    <citation type="submission" date="2006-08" db="EMBL/GenBank/DDBJ databases">
        <title>Complete sequence of Shewanella frigidimarina NCIMB 400.</title>
        <authorList>
            <consortium name="US DOE Joint Genome Institute"/>
            <person name="Copeland A."/>
            <person name="Lucas S."/>
            <person name="Lapidus A."/>
            <person name="Barry K."/>
            <person name="Detter J.C."/>
            <person name="Glavina del Rio T."/>
            <person name="Hammon N."/>
            <person name="Israni S."/>
            <person name="Dalin E."/>
            <person name="Tice H."/>
            <person name="Pitluck S."/>
            <person name="Fredrickson J.K."/>
            <person name="Kolker E."/>
            <person name="McCuel L.A."/>
            <person name="DiChristina T."/>
            <person name="Nealson K.H."/>
            <person name="Newman D."/>
            <person name="Tiedje J.M."/>
            <person name="Zhou J."/>
            <person name="Romine M.F."/>
            <person name="Culley D.E."/>
            <person name="Serres M."/>
            <person name="Chertkov O."/>
            <person name="Brettin T."/>
            <person name="Bruce D."/>
            <person name="Han C."/>
            <person name="Tapia R."/>
            <person name="Gilna P."/>
            <person name="Schmutz J."/>
            <person name="Larimer F."/>
            <person name="Land M."/>
            <person name="Hauser L."/>
            <person name="Kyrpides N."/>
            <person name="Mikhailova N."/>
            <person name="Richardson P."/>
        </authorList>
    </citation>
    <scope>NUCLEOTIDE SEQUENCE [LARGE SCALE GENOMIC DNA]</scope>
    <source>
        <strain>NCIMB 400</strain>
    </source>
</reference>
<organism>
    <name type="scientific">Shewanella frigidimarina (strain NCIMB 400)</name>
    <dbReference type="NCBI Taxonomy" id="318167"/>
    <lineage>
        <taxon>Bacteria</taxon>
        <taxon>Pseudomonadati</taxon>
        <taxon>Pseudomonadota</taxon>
        <taxon>Gammaproteobacteria</taxon>
        <taxon>Alteromonadales</taxon>
        <taxon>Shewanellaceae</taxon>
        <taxon>Shewanella</taxon>
    </lineage>
</organism>
<evidence type="ECO:0000255" key="1">
    <source>
        <dbReference type="HAMAP-Rule" id="MF_01008"/>
    </source>
</evidence>
<evidence type="ECO:0000255" key="2">
    <source>
        <dbReference type="PROSITE-ProRule" id="PRU01076"/>
    </source>
</evidence>
<protein>
    <recommendedName>
        <fullName>Transcriptional regulator MraZ</fullName>
    </recommendedName>
</protein>